<comment type="function">
    <text evidence="1 6">Protects DRG1 from proteolytic degradation (PubMed:15676025). Stimulates DRG1 GTPase activity likely by increasing the affinity for the potassium ions (By similarity).</text>
</comment>
<comment type="subunit">
    <text evidence="1 6">Interacts with DRG1; the interaction forms a polysomal DRG1-DFRP1/ZC3H15 complex which provides protein stability to DRG1 possibly by blocking poly-ubiquitination (PubMed:15676025). Associates with microtubules (By similarity).</text>
</comment>
<comment type="subcellular location">
    <subcellularLocation>
        <location>Cytoplasm</location>
    </subcellularLocation>
    <subcellularLocation>
        <location evidence="1">Nucleus</location>
    </subcellularLocation>
    <text evidence="1">The DRG1-DFRP2/ZC3H15 complex associates with polysomes.</text>
</comment>
<comment type="alternative products">
    <event type="alternative splicing"/>
    <isoform>
        <id>Q3TIV5-1</id>
        <name>1</name>
        <sequence type="displayed"/>
    </isoform>
    <isoform>
        <id>Q3TIV5-2</id>
        <name>2</name>
        <sequence type="described" ref="VSP_032341"/>
    </isoform>
    <isoform>
        <id>Q3TIV5-3</id>
        <name>3</name>
        <sequence type="described" ref="VSP_032342 VSP_032343"/>
    </isoform>
</comment>
<comment type="induction">
    <text evidence="5">By erythropoietin.</text>
</comment>
<comment type="similarity">
    <text evidence="9">Belongs to the ZC3H15/TMA46 family.</text>
</comment>
<comment type="sequence caution" evidence="9">
    <conflict type="frameshift">
        <sequence resource="EMBL-CDS" id="BAE31164"/>
    </conflict>
</comment>
<proteinExistence type="evidence at protein level"/>
<protein>
    <recommendedName>
        <fullName>Zinc finger CCCH domain-containing protein 15</fullName>
    </recommendedName>
    <alternativeName>
        <fullName>DRG family-regulatory protein 1</fullName>
    </alternativeName>
    <alternativeName>
        <fullName>Epo-immediate response gene protein FM22</fullName>
    </alternativeName>
</protein>
<sequence>MPPKKQAQAGGSKKAEQKKKEKIIEDKTFGLKNKKGAKQQKFIKAVTHQVKFGQQNPRQVAQSEAEKKLKKDDKKKELQELNELFKPVVAAQKISKGADPKSVVCAFFKQGQCTKGDKCKFSHDLTLERKCEKRSVYIDARDEELEKDTMDNWDEKKLEEVVNKKHGEAEKKKPKTQIVCRHFLEAIENNKYGWFWVCPGGGDNCMYRHALPPGFVLKKDKKKEEKEDEISLEDLIERERSALGPNVTKITLESFLAWKKRKRQEKIDKLEQDMERRKADFKAGKALVISGREVFEFRPELVNDDDEEADDTRYIQGTGGDEVDDSMGVNDIDISLYVPRDVEETGITVASVERFSTYAPDKDENKLSEASGGLAENGERSDLDEDSGGGGQENGSIDAVPVDENLFTGEDLDELEEELNTLDLEE</sequence>
<organism>
    <name type="scientific">Mus musculus</name>
    <name type="common">Mouse</name>
    <dbReference type="NCBI Taxonomy" id="10090"/>
    <lineage>
        <taxon>Eukaryota</taxon>
        <taxon>Metazoa</taxon>
        <taxon>Chordata</taxon>
        <taxon>Craniata</taxon>
        <taxon>Vertebrata</taxon>
        <taxon>Euteleostomi</taxon>
        <taxon>Mammalia</taxon>
        <taxon>Eutheria</taxon>
        <taxon>Euarchontoglires</taxon>
        <taxon>Glires</taxon>
        <taxon>Rodentia</taxon>
        <taxon>Myomorpha</taxon>
        <taxon>Muroidea</taxon>
        <taxon>Muridae</taxon>
        <taxon>Murinae</taxon>
        <taxon>Mus</taxon>
        <taxon>Mus</taxon>
    </lineage>
</organism>
<accession>Q3TIV5</accession>
<accession>Q3TWQ0</accession>
<accession>Q3U855</accession>
<accession>Q8K2B6</accession>
<accession>Q8K346</accession>
<accession>Q9CVM4</accession>
<accession>Q9DAP2</accession>
<reference key="1">
    <citation type="journal article" date="2005" name="Science">
        <title>The transcriptional landscape of the mammalian genome.</title>
        <authorList>
            <person name="Carninci P."/>
            <person name="Kasukawa T."/>
            <person name="Katayama S."/>
            <person name="Gough J."/>
            <person name="Frith M.C."/>
            <person name="Maeda N."/>
            <person name="Oyama R."/>
            <person name="Ravasi T."/>
            <person name="Lenhard B."/>
            <person name="Wells C."/>
            <person name="Kodzius R."/>
            <person name="Shimokawa K."/>
            <person name="Bajic V.B."/>
            <person name="Brenner S.E."/>
            <person name="Batalov S."/>
            <person name="Forrest A.R."/>
            <person name="Zavolan M."/>
            <person name="Davis M.J."/>
            <person name="Wilming L.G."/>
            <person name="Aidinis V."/>
            <person name="Allen J.E."/>
            <person name="Ambesi-Impiombato A."/>
            <person name="Apweiler R."/>
            <person name="Aturaliya R.N."/>
            <person name="Bailey T.L."/>
            <person name="Bansal M."/>
            <person name="Baxter L."/>
            <person name="Beisel K.W."/>
            <person name="Bersano T."/>
            <person name="Bono H."/>
            <person name="Chalk A.M."/>
            <person name="Chiu K.P."/>
            <person name="Choudhary V."/>
            <person name="Christoffels A."/>
            <person name="Clutterbuck D.R."/>
            <person name="Crowe M.L."/>
            <person name="Dalla E."/>
            <person name="Dalrymple B.P."/>
            <person name="de Bono B."/>
            <person name="Della Gatta G."/>
            <person name="di Bernardo D."/>
            <person name="Down T."/>
            <person name="Engstrom P."/>
            <person name="Fagiolini M."/>
            <person name="Faulkner G."/>
            <person name="Fletcher C.F."/>
            <person name="Fukushima T."/>
            <person name="Furuno M."/>
            <person name="Futaki S."/>
            <person name="Gariboldi M."/>
            <person name="Georgii-Hemming P."/>
            <person name="Gingeras T.R."/>
            <person name="Gojobori T."/>
            <person name="Green R.E."/>
            <person name="Gustincich S."/>
            <person name="Harbers M."/>
            <person name="Hayashi Y."/>
            <person name="Hensch T.K."/>
            <person name="Hirokawa N."/>
            <person name="Hill D."/>
            <person name="Huminiecki L."/>
            <person name="Iacono M."/>
            <person name="Ikeo K."/>
            <person name="Iwama A."/>
            <person name="Ishikawa T."/>
            <person name="Jakt M."/>
            <person name="Kanapin A."/>
            <person name="Katoh M."/>
            <person name="Kawasawa Y."/>
            <person name="Kelso J."/>
            <person name="Kitamura H."/>
            <person name="Kitano H."/>
            <person name="Kollias G."/>
            <person name="Krishnan S.P."/>
            <person name="Kruger A."/>
            <person name="Kummerfeld S.K."/>
            <person name="Kurochkin I.V."/>
            <person name="Lareau L.F."/>
            <person name="Lazarevic D."/>
            <person name="Lipovich L."/>
            <person name="Liu J."/>
            <person name="Liuni S."/>
            <person name="McWilliam S."/>
            <person name="Madan Babu M."/>
            <person name="Madera M."/>
            <person name="Marchionni L."/>
            <person name="Matsuda H."/>
            <person name="Matsuzawa S."/>
            <person name="Miki H."/>
            <person name="Mignone F."/>
            <person name="Miyake S."/>
            <person name="Morris K."/>
            <person name="Mottagui-Tabar S."/>
            <person name="Mulder N."/>
            <person name="Nakano N."/>
            <person name="Nakauchi H."/>
            <person name="Ng P."/>
            <person name="Nilsson R."/>
            <person name="Nishiguchi S."/>
            <person name="Nishikawa S."/>
            <person name="Nori F."/>
            <person name="Ohara O."/>
            <person name="Okazaki Y."/>
            <person name="Orlando V."/>
            <person name="Pang K.C."/>
            <person name="Pavan W.J."/>
            <person name="Pavesi G."/>
            <person name="Pesole G."/>
            <person name="Petrovsky N."/>
            <person name="Piazza S."/>
            <person name="Reed J."/>
            <person name="Reid J.F."/>
            <person name="Ring B.Z."/>
            <person name="Ringwald M."/>
            <person name="Rost B."/>
            <person name="Ruan Y."/>
            <person name="Salzberg S.L."/>
            <person name="Sandelin A."/>
            <person name="Schneider C."/>
            <person name="Schoenbach C."/>
            <person name="Sekiguchi K."/>
            <person name="Semple C.A."/>
            <person name="Seno S."/>
            <person name="Sessa L."/>
            <person name="Sheng Y."/>
            <person name="Shibata Y."/>
            <person name="Shimada H."/>
            <person name="Shimada K."/>
            <person name="Silva D."/>
            <person name="Sinclair B."/>
            <person name="Sperling S."/>
            <person name="Stupka E."/>
            <person name="Sugiura K."/>
            <person name="Sultana R."/>
            <person name="Takenaka Y."/>
            <person name="Taki K."/>
            <person name="Tammoja K."/>
            <person name="Tan S.L."/>
            <person name="Tang S."/>
            <person name="Taylor M.S."/>
            <person name="Tegner J."/>
            <person name="Teichmann S.A."/>
            <person name="Ueda H.R."/>
            <person name="van Nimwegen E."/>
            <person name="Verardo R."/>
            <person name="Wei C.L."/>
            <person name="Yagi K."/>
            <person name="Yamanishi H."/>
            <person name="Zabarovsky E."/>
            <person name="Zhu S."/>
            <person name="Zimmer A."/>
            <person name="Hide W."/>
            <person name="Bult C."/>
            <person name="Grimmond S.M."/>
            <person name="Teasdale R.D."/>
            <person name="Liu E.T."/>
            <person name="Brusic V."/>
            <person name="Quackenbush J."/>
            <person name="Wahlestedt C."/>
            <person name="Mattick J.S."/>
            <person name="Hume D.A."/>
            <person name="Kai C."/>
            <person name="Sasaki D."/>
            <person name="Tomaru Y."/>
            <person name="Fukuda S."/>
            <person name="Kanamori-Katayama M."/>
            <person name="Suzuki M."/>
            <person name="Aoki J."/>
            <person name="Arakawa T."/>
            <person name="Iida J."/>
            <person name="Imamura K."/>
            <person name="Itoh M."/>
            <person name="Kato T."/>
            <person name="Kawaji H."/>
            <person name="Kawagashira N."/>
            <person name="Kawashima T."/>
            <person name="Kojima M."/>
            <person name="Kondo S."/>
            <person name="Konno H."/>
            <person name="Nakano K."/>
            <person name="Ninomiya N."/>
            <person name="Nishio T."/>
            <person name="Okada M."/>
            <person name="Plessy C."/>
            <person name="Shibata K."/>
            <person name="Shiraki T."/>
            <person name="Suzuki S."/>
            <person name="Tagami M."/>
            <person name="Waki K."/>
            <person name="Watahiki A."/>
            <person name="Okamura-Oho Y."/>
            <person name="Suzuki H."/>
            <person name="Kawai J."/>
            <person name="Hayashizaki Y."/>
        </authorList>
    </citation>
    <scope>NUCLEOTIDE SEQUENCE [LARGE SCALE MRNA] (ISOFORM 1)</scope>
    <source>
        <strain>C57BL/6J</strain>
        <tissue>Bone marrow</tissue>
        <tissue>Pancreas</tissue>
        <tissue>Placenta</tissue>
        <tissue>Testis</tissue>
    </source>
</reference>
<reference key="2">
    <citation type="journal article" date="2009" name="PLoS Biol.">
        <title>Lineage-specific biology revealed by a finished genome assembly of the mouse.</title>
        <authorList>
            <person name="Church D.M."/>
            <person name="Goodstadt L."/>
            <person name="Hillier L.W."/>
            <person name="Zody M.C."/>
            <person name="Goldstein S."/>
            <person name="She X."/>
            <person name="Bult C.J."/>
            <person name="Agarwala R."/>
            <person name="Cherry J.L."/>
            <person name="DiCuccio M."/>
            <person name="Hlavina W."/>
            <person name="Kapustin Y."/>
            <person name="Meric P."/>
            <person name="Maglott D."/>
            <person name="Birtle Z."/>
            <person name="Marques A.C."/>
            <person name="Graves T."/>
            <person name="Zhou S."/>
            <person name="Teague B."/>
            <person name="Potamousis K."/>
            <person name="Churas C."/>
            <person name="Place M."/>
            <person name="Herschleb J."/>
            <person name="Runnheim R."/>
            <person name="Forrest D."/>
            <person name="Amos-Landgraf J."/>
            <person name="Schwartz D.C."/>
            <person name="Cheng Z."/>
            <person name="Lindblad-Toh K."/>
            <person name="Eichler E.E."/>
            <person name="Ponting C.P."/>
        </authorList>
    </citation>
    <scope>NUCLEOTIDE SEQUENCE [LARGE SCALE GENOMIC DNA]</scope>
    <source>
        <strain>C57BL/6J</strain>
    </source>
</reference>
<reference key="3">
    <citation type="journal article" date="2004" name="Genome Res.">
        <title>The status, quality, and expansion of the NIH full-length cDNA project: the Mammalian Gene Collection (MGC).</title>
        <authorList>
            <consortium name="The MGC Project Team"/>
        </authorList>
    </citation>
    <scope>NUCLEOTIDE SEQUENCE [LARGE SCALE MRNA] (ISOFORMS 1 AND 2)</scope>
    <source>
        <strain>C57BL/6J</strain>
        <strain>Czech II</strain>
        <tissue>Mammary tumor</tissue>
        <tissue>Olfactory epithelium</tissue>
    </source>
</reference>
<reference key="4">
    <citation type="journal article" date="2000" name="Cytokine">
        <title>Subtraction cloning and initial characterization of novel EPO-immediate response genes.</title>
        <authorList>
            <person name="Gregory R.C. Jr."/>
            <person name="Lord K.A."/>
            <person name="Panek L.B."/>
            <person name="Gaines P."/>
            <person name="Dillon S.B."/>
            <person name="Wojchowski D.M."/>
        </authorList>
    </citation>
    <scope>NUCLEOTIDE SEQUENCE [MRNA] OF 1-337 (ISOFORM 2)</scope>
    <scope>TISSUE SPECIFICITY</scope>
    <scope>INDUCTION BY EPO</scope>
</reference>
<reference key="5">
    <citation type="journal article" date="2005" name="Genes Cells">
        <title>Identification of DRG family regulatory proteins (DFRPs): specific regulation of DRG1 and DRG2.</title>
        <authorList>
            <person name="Ishikawa K."/>
            <person name="Azuma S."/>
            <person name="Ikawa S."/>
            <person name="Semba K."/>
            <person name="Inoue J."/>
        </authorList>
    </citation>
    <scope>INTERACTION WITH DRG1</scope>
    <scope>FUNCTION</scope>
</reference>
<reference key="6">
    <citation type="journal article" date="2010" name="Cell">
        <title>A tissue-specific atlas of mouse protein phosphorylation and expression.</title>
        <authorList>
            <person name="Huttlin E.L."/>
            <person name="Jedrychowski M.P."/>
            <person name="Elias J.E."/>
            <person name="Goswami T."/>
            <person name="Rad R."/>
            <person name="Beausoleil S.A."/>
            <person name="Villen J."/>
            <person name="Haas W."/>
            <person name="Sowa M.E."/>
            <person name="Gygi S.P."/>
        </authorList>
    </citation>
    <scope>IDENTIFICATION BY MASS SPECTROMETRY [LARGE SCALE ANALYSIS]</scope>
    <source>
        <tissue>Brown adipose tissue</tissue>
        <tissue>Kidney</tissue>
        <tissue>Liver</tissue>
        <tissue>Lung</tissue>
        <tissue>Pancreas</tissue>
        <tissue>Spleen</tissue>
        <tissue>Testis</tissue>
    </source>
</reference>
<evidence type="ECO:0000250" key="1">
    <source>
        <dbReference type="UniProtKB" id="Q8WU90"/>
    </source>
</evidence>
<evidence type="ECO:0000255" key="2"/>
<evidence type="ECO:0000255" key="3">
    <source>
        <dbReference type="PROSITE-ProRule" id="PRU00723"/>
    </source>
</evidence>
<evidence type="ECO:0000256" key="4">
    <source>
        <dbReference type="SAM" id="MobiDB-lite"/>
    </source>
</evidence>
<evidence type="ECO:0000269" key="5">
    <source>
    </source>
</evidence>
<evidence type="ECO:0000269" key="6">
    <source>
    </source>
</evidence>
<evidence type="ECO:0000303" key="7">
    <source>
    </source>
</evidence>
<evidence type="ECO:0000303" key="8">
    <source>
    </source>
</evidence>
<evidence type="ECO:0000305" key="9"/>
<keyword id="KW-0025">Alternative splicing</keyword>
<keyword id="KW-0175">Coiled coil</keyword>
<keyword id="KW-0963">Cytoplasm</keyword>
<keyword id="KW-0479">Metal-binding</keyword>
<keyword id="KW-0539">Nucleus</keyword>
<keyword id="KW-0597">Phosphoprotein</keyword>
<keyword id="KW-1185">Reference proteome</keyword>
<keyword id="KW-0677">Repeat</keyword>
<keyword id="KW-0862">Zinc</keyword>
<keyword id="KW-0863">Zinc-finger</keyword>
<gene>
    <name type="primary">Zc3h15</name>
    <name type="synonym">Dfrp1</name>
</gene>
<name>ZC3HF_MOUSE</name>
<dbReference type="EMBL" id="AK005661">
    <property type="protein sequence ID" value="BAB24173.1"/>
    <property type="molecule type" value="mRNA"/>
</dbReference>
<dbReference type="EMBL" id="AK007452">
    <property type="protein sequence ID" value="BAB25047.1"/>
    <property type="molecule type" value="mRNA"/>
</dbReference>
<dbReference type="EMBL" id="AK152374">
    <property type="protein sequence ID" value="BAE31164.1"/>
    <property type="status" value="ALT_FRAME"/>
    <property type="molecule type" value="mRNA"/>
</dbReference>
<dbReference type="EMBL" id="AK159596">
    <property type="protein sequence ID" value="BAE35216.1"/>
    <property type="molecule type" value="mRNA"/>
</dbReference>
<dbReference type="EMBL" id="AK167696">
    <property type="protein sequence ID" value="BAE39741.1"/>
    <property type="molecule type" value="mRNA"/>
</dbReference>
<dbReference type="EMBL" id="AL772301">
    <property type="status" value="NOT_ANNOTATED_CDS"/>
    <property type="molecule type" value="Genomic_DNA"/>
</dbReference>
<dbReference type="EMBL" id="BX294652">
    <property type="status" value="NOT_ANNOTATED_CDS"/>
    <property type="molecule type" value="Genomic_DNA"/>
</dbReference>
<dbReference type="EMBL" id="BC028787">
    <property type="protein sequence ID" value="AAH28787.1"/>
    <property type="molecule type" value="mRNA"/>
</dbReference>
<dbReference type="EMBL" id="BC031845">
    <property type="protein sequence ID" value="AAH31845.1"/>
    <property type="molecule type" value="mRNA"/>
</dbReference>
<dbReference type="EMBL" id="BC058229">
    <property type="protein sequence ID" value="AAH58229.1"/>
    <property type="molecule type" value="mRNA"/>
</dbReference>
<dbReference type="EMBL" id="AF221851">
    <property type="status" value="NOT_ANNOTATED_CDS"/>
    <property type="molecule type" value="mRNA"/>
</dbReference>
<dbReference type="CCDS" id="CCDS16180.1">
    <molecule id="Q3TIV5-1"/>
</dbReference>
<dbReference type="RefSeq" id="NP_081210.2">
    <molecule id="Q3TIV5-1"/>
    <property type="nucleotide sequence ID" value="NM_026934.3"/>
</dbReference>
<dbReference type="SMR" id="Q3TIV5"/>
<dbReference type="BioGRID" id="213217">
    <property type="interactions" value="11"/>
</dbReference>
<dbReference type="CORUM" id="Q3TIV5"/>
<dbReference type="FunCoup" id="Q3TIV5">
    <property type="interactions" value="3709"/>
</dbReference>
<dbReference type="IntAct" id="Q3TIV5">
    <property type="interactions" value="2"/>
</dbReference>
<dbReference type="MINT" id="Q3TIV5"/>
<dbReference type="STRING" id="10090.ENSMUSP00000080301"/>
<dbReference type="iPTMnet" id="Q3TIV5"/>
<dbReference type="PhosphoSitePlus" id="Q3TIV5"/>
<dbReference type="SwissPalm" id="Q3TIV5"/>
<dbReference type="jPOST" id="Q3TIV5"/>
<dbReference type="PaxDb" id="10090-ENSMUSP00000080301"/>
<dbReference type="PeptideAtlas" id="Q3TIV5"/>
<dbReference type="ProteomicsDB" id="302111">
    <molecule id="Q3TIV5-1"/>
</dbReference>
<dbReference type="ProteomicsDB" id="302112">
    <molecule id="Q3TIV5-2"/>
</dbReference>
<dbReference type="ProteomicsDB" id="302113">
    <molecule id="Q3TIV5-3"/>
</dbReference>
<dbReference type="Pumba" id="Q3TIV5"/>
<dbReference type="Antibodypedia" id="34002">
    <property type="antibodies" value="123 antibodies from 23 providers"/>
</dbReference>
<dbReference type="DNASU" id="69082"/>
<dbReference type="Ensembl" id="ENSMUST00000081591.7">
    <molecule id="Q3TIV5-1"/>
    <property type="protein sequence ID" value="ENSMUSP00000080301.7"/>
    <property type="gene ID" value="ENSMUSG00000027091.15"/>
</dbReference>
<dbReference type="GeneID" id="69082"/>
<dbReference type="KEGG" id="mmu:69082"/>
<dbReference type="UCSC" id="uc008khx.1">
    <molecule id="Q3TIV5-3"/>
    <property type="organism name" value="mouse"/>
</dbReference>
<dbReference type="UCSC" id="uc008khy.1">
    <molecule id="Q3TIV5-1"/>
    <property type="organism name" value="mouse"/>
</dbReference>
<dbReference type="AGR" id="MGI:1919747"/>
<dbReference type="CTD" id="55854"/>
<dbReference type="MGI" id="MGI:1919747">
    <property type="gene designation" value="Zc3h15"/>
</dbReference>
<dbReference type="VEuPathDB" id="HostDB:ENSMUSG00000027091"/>
<dbReference type="eggNOG" id="KOG1763">
    <property type="taxonomic scope" value="Eukaryota"/>
</dbReference>
<dbReference type="GeneTree" id="ENSGT00390000015818"/>
<dbReference type="HOGENOM" id="CLU_042870_3_0_1"/>
<dbReference type="InParanoid" id="Q3TIV5"/>
<dbReference type="OMA" id="GREMFYF"/>
<dbReference type="OrthoDB" id="278280at2759"/>
<dbReference type="PhylomeDB" id="Q3TIV5"/>
<dbReference type="TreeFam" id="TF300892"/>
<dbReference type="Reactome" id="R-MMU-9629569">
    <property type="pathway name" value="Protein hydroxylation"/>
</dbReference>
<dbReference type="BioGRID-ORCS" id="69082">
    <property type="hits" value="7 hits in 79 CRISPR screens"/>
</dbReference>
<dbReference type="ChiTaRS" id="Zc3h15">
    <property type="organism name" value="mouse"/>
</dbReference>
<dbReference type="PRO" id="PR:Q3TIV5"/>
<dbReference type="Proteomes" id="UP000000589">
    <property type="component" value="Chromosome 2"/>
</dbReference>
<dbReference type="RNAct" id="Q3TIV5">
    <property type="molecule type" value="protein"/>
</dbReference>
<dbReference type="Bgee" id="ENSMUSG00000027091">
    <property type="expression patterns" value="Expressed in rostral migratory stream and 265 other cell types or tissues"/>
</dbReference>
<dbReference type="GO" id="GO:0005829">
    <property type="term" value="C:cytosol"/>
    <property type="evidence" value="ECO:0007669"/>
    <property type="project" value="Ensembl"/>
</dbReference>
<dbReference type="GO" id="GO:0005634">
    <property type="term" value="C:nucleus"/>
    <property type="evidence" value="ECO:0007669"/>
    <property type="project" value="UniProtKB-SubCell"/>
</dbReference>
<dbReference type="GO" id="GO:0008270">
    <property type="term" value="F:zinc ion binding"/>
    <property type="evidence" value="ECO:0007669"/>
    <property type="project" value="UniProtKB-KW"/>
</dbReference>
<dbReference type="GO" id="GO:0019221">
    <property type="term" value="P:cytokine-mediated signaling pathway"/>
    <property type="evidence" value="ECO:0000314"/>
    <property type="project" value="MGI"/>
</dbReference>
<dbReference type="FunFam" id="4.10.1000.10:FF:000050">
    <property type="entry name" value="AGAP008634-PA"/>
    <property type="match status" value="1"/>
</dbReference>
<dbReference type="Gene3D" id="6.20.400.10">
    <property type="match status" value="1"/>
</dbReference>
<dbReference type="Gene3D" id="4.10.1000.10">
    <property type="entry name" value="Zinc finger, CCCH-type"/>
    <property type="match status" value="1"/>
</dbReference>
<dbReference type="InterPro" id="IPR032378">
    <property type="entry name" value="ZC3H15/TMA46_C"/>
</dbReference>
<dbReference type="InterPro" id="IPR000571">
    <property type="entry name" value="Znf_CCCH"/>
</dbReference>
<dbReference type="InterPro" id="IPR036855">
    <property type="entry name" value="Znf_CCCH_sf"/>
</dbReference>
<dbReference type="PANTHER" id="PTHR12681:SF0">
    <property type="entry name" value="ZINC FINGER CCCH DOMAIN-CONTAINING PROTEIN 15"/>
    <property type="match status" value="1"/>
</dbReference>
<dbReference type="PANTHER" id="PTHR12681">
    <property type="entry name" value="ZINC FINGER-CONTAINING PROTEIN P48ZNF"/>
    <property type="match status" value="1"/>
</dbReference>
<dbReference type="Pfam" id="PF16543">
    <property type="entry name" value="DFRP_C"/>
    <property type="match status" value="1"/>
</dbReference>
<dbReference type="Pfam" id="PF00642">
    <property type="entry name" value="zf-CCCH"/>
    <property type="match status" value="1"/>
</dbReference>
<dbReference type="SMART" id="SM00356">
    <property type="entry name" value="ZnF_C3H1"/>
    <property type="match status" value="2"/>
</dbReference>
<dbReference type="SUPFAM" id="SSF90229">
    <property type="entry name" value="CCCH zinc finger"/>
    <property type="match status" value="1"/>
</dbReference>
<dbReference type="PROSITE" id="PS50103">
    <property type="entry name" value="ZF_C3H1"/>
    <property type="match status" value="2"/>
</dbReference>
<feature type="chain" id="PRO_0000324643" description="Zinc finger CCCH domain-containing protein 15">
    <location>
        <begin position="1"/>
        <end position="426"/>
    </location>
</feature>
<feature type="zinc finger region" description="C3H1-type 1" evidence="3">
    <location>
        <begin position="99"/>
        <end position="126"/>
    </location>
</feature>
<feature type="zinc finger region" description="C3H1-type 2" evidence="3">
    <location>
        <begin position="174"/>
        <end position="212"/>
    </location>
</feature>
<feature type="region of interest" description="Disordered" evidence="4">
    <location>
        <begin position="1"/>
        <end position="30"/>
    </location>
</feature>
<feature type="region of interest" description="Disordered" evidence="4">
    <location>
        <begin position="53"/>
        <end position="74"/>
    </location>
</feature>
<feature type="region of interest" description="Required for interaction with DRG1" evidence="6">
    <location>
        <begin position="236"/>
        <end position="260"/>
    </location>
</feature>
<feature type="region of interest" description="Disordered" evidence="4">
    <location>
        <begin position="303"/>
        <end position="328"/>
    </location>
</feature>
<feature type="region of interest" description="Disordered" evidence="4">
    <location>
        <begin position="358"/>
        <end position="426"/>
    </location>
</feature>
<feature type="coiled-coil region" evidence="2">
    <location>
        <begin position="61"/>
        <end position="86"/>
    </location>
</feature>
<feature type="coiled-coil region" evidence="2">
    <location>
        <begin position="218"/>
        <end position="285"/>
    </location>
</feature>
<feature type="compositionally biased region" description="Low complexity" evidence="4">
    <location>
        <begin position="1"/>
        <end position="12"/>
    </location>
</feature>
<feature type="compositionally biased region" description="Basic and acidic residues" evidence="4">
    <location>
        <begin position="13"/>
        <end position="29"/>
    </location>
</feature>
<feature type="compositionally biased region" description="Polar residues" evidence="4">
    <location>
        <begin position="53"/>
        <end position="62"/>
    </location>
</feature>
<feature type="compositionally biased region" description="Basic and acidic residues" evidence="4">
    <location>
        <begin position="64"/>
        <end position="74"/>
    </location>
</feature>
<feature type="compositionally biased region" description="Acidic residues" evidence="4">
    <location>
        <begin position="410"/>
        <end position="426"/>
    </location>
</feature>
<feature type="modified residue" description="Phosphoserine" evidence="1">
    <location>
        <position position="231"/>
    </location>
</feature>
<feature type="modified residue" description="Phosphoserine" evidence="1">
    <location>
        <position position="351"/>
    </location>
</feature>
<feature type="modified residue" description="Phosphoserine" evidence="1">
    <location>
        <position position="381"/>
    </location>
</feature>
<feature type="splice variant" id="VSP_032341" description="In isoform 2." evidence="7 8">
    <location>
        <begin position="1"/>
        <end position="205"/>
    </location>
</feature>
<feature type="splice variant" id="VSP_032342" description="In isoform 3." evidence="9">
    <original>DTMD</original>
    <variation>GISS</variation>
    <location>
        <begin position="148"/>
        <end position="151"/>
    </location>
</feature>
<feature type="splice variant" id="VSP_032343" description="In isoform 3." evidence="9">
    <location>
        <begin position="152"/>
        <end position="426"/>
    </location>
</feature>
<feature type="sequence conflict" description="In Ref. 1; BAE35216." evidence="9" ref="1">
    <original>D</original>
    <variation>E</variation>
    <location>
        <position position="142"/>
    </location>
</feature>
<feature type="sequence conflict" description="In Ref. 1; BAE39741." evidence="9" ref="1">
    <original>L</original>
    <variation>P</variation>
    <location>
        <position position="145"/>
    </location>
</feature>
<feature type="sequence conflict" description="In Ref. 4; AF221851." evidence="9" ref="4">
    <original>D</original>
    <variation>G</variation>
    <location>
        <position position="280"/>
    </location>
</feature>